<comment type="similarity">
    <text evidence="1">Belongs to the UPF0276 family.</text>
</comment>
<organism>
    <name type="scientific">Pseudomonas aeruginosa (strain UCBPP-PA14)</name>
    <dbReference type="NCBI Taxonomy" id="208963"/>
    <lineage>
        <taxon>Bacteria</taxon>
        <taxon>Pseudomonadati</taxon>
        <taxon>Pseudomonadota</taxon>
        <taxon>Gammaproteobacteria</taxon>
        <taxon>Pseudomonadales</taxon>
        <taxon>Pseudomonadaceae</taxon>
        <taxon>Pseudomonas</taxon>
    </lineage>
</organism>
<dbReference type="EMBL" id="CP000438">
    <property type="protein sequence ID" value="ABJ12533.1"/>
    <property type="molecule type" value="Genomic_DNA"/>
</dbReference>
<dbReference type="RefSeq" id="WP_003091624.1">
    <property type="nucleotide sequence ID" value="NZ_CP034244.1"/>
</dbReference>
<dbReference type="SMR" id="Q02QB5"/>
<dbReference type="KEGG" id="pau:PA14_21580"/>
<dbReference type="PseudoCAP" id="PA14_21580"/>
<dbReference type="HOGENOM" id="CLU_064263_0_0_6"/>
<dbReference type="BioCyc" id="PAER208963:G1G74-1786-MONOMER"/>
<dbReference type="Proteomes" id="UP000000653">
    <property type="component" value="Chromosome"/>
</dbReference>
<dbReference type="Gene3D" id="3.20.20.150">
    <property type="entry name" value="Divalent-metal-dependent TIM barrel enzymes"/>
    <property type="match status" value="1"/>
</dbReference>
<dbReference type="HAMAP" id="MF_00697">
    <property type="entry name" value="UPF0276"/>
    <property type="match status" value="1"/>
</dbReference>
<dbReference type="InterPro" id="IPR007801">
    <property type="entry name" value="MbnB/TglH/ChrH"/>
</dbReference>
<dbReference type="InterPro" id="IPR036237">
    <property type="entry name" value="Xyl_isomerase-like_sf"/>
</dbReference>
<dbReference type="NCBIfam" id="NF003818">
    <property type="entry name" value="PRK05409.1"/>
    <property type="match status" value="1"/>
</dbReference>
<dbReference type="PANTHER" id="PTHR42194">
    <property type="entry name" value="UPF0276 PROTEIN HI_1600"/>
    <property type="match status" value="1"/>
</dbReference>
<dbReference type="PANTHER" id="PTHR42194:SF1">
    <property type="entry name" value="UPF0276 PROTEIN HI_1600"/>
    <property type="match status" value="1"/>
</dbReference>
<dbReference type="Pfam" id="PF05114">
    <property type="entry name" value="MbnB_TglH_ChrH"/>
    <property type="match status" value="1"/>
</dbReference>
<dbReference type="SUPFAM" id="SSF51658">
    <property type="entry name" value="Xylose isomerase-like"/>
    <property type="match status" value="1"/>
</dbReference>
<name>Y2158_PSEAB</name>
<sequence length="284" mass="31697">MQREFVSGAGLGLRRALLEPLGAGDEVRVDFLEVAPENWIGIGGRLGRQFRELTERLPFLCHGLSLNLGGYAPLDMSLLRAIKGFIEQHGIRAYSEHLSACADDGQLYDLMPLPFSDESVRRVAERVRVVQDVLERPLIVENVSAYARLPGELEEVDFVRAVLEEADCQLLLDVNNVYVNACNFGFDAHAYIAAMPSRRIAYLHMAGHDEQGASLKIDTHGAPVCDPVWELLAHAYACHGERPTLLERDFNLPPLSELYAETDRIRELQRRSGEAQLRSLGYGT</sequence>
<reference key="1">
    <citation type="journal article" date="2006" name="Genome Biol.">
        <title>Genomic analysis reveals that Pseudomonas aeruginosa virulence is combinatorial.</title>
        <authorList>
            <person name="Lee D.G."/>
            <person name="Urbach J.M."/>
            <person name="Wu G."/>
            <person name="Liberati N.T."/>
            <person name="Feinbaum R.L."/>
            <person name="Miyata S."/>
            <person name="Diggins L.T."/>
            <person name="He J."/>
            <person name="Saucier M."/>
            <person name="Deziel E."/>
            <person name="Friedman L."/>
            <person name="Li L."/>
            <person name="Grills G."/>
            <person name="Montgomery K."/>
            <person name="Kucherlapati R."/>
            <person name="Rahme L.G."/>
            <person name="Ausubel F.M."/>
        </authorList>
    </citation>
    <scope>NUCLEOTIDE SEQUENCE [LARGE SCALE GENOMIC DNA]</scope>
    <source>
        <strain>UCBPP-PA14</strain>
    </source>
</reference>
<evidence type="ECO:0000255" key="1">
    <source>
        <dbReference type="HAMAP-Rule" id="MF_00697"/>
    </source>
</evidence>
<gene>
    <name type="ordered locus">PA14_21580</name>
</gene>
<protein>
    <recommendedName>
        <fullName evidence="1">UPF0276 protein PA14_21580</fullName>
    </recommendedName>
</protein>
<accession>Q02QB5</accession>
<feature type="chain" id="PRO_1000045473" description="UPF0276 protein PA14_21580">
    <location>
        <begin position="1"/>
        <end position="284"/>
    </location>
</feature>
<proteinExistence type="inferred from homology"/>